<gene>
    <name type="primary">MT-ND4</name>
    <name type="synonym">MTND4</name>
    <name type="synonym">NADH4</name>
    <name type="synonym">ND4</name>
</gene>
<evidence type="ECO:0000250" key="1"/>
<evidence type="ECO:0000255" key="2"/>
<evidence type="ECO:0000305" key="3"/>
<feature type="chain" id="PRO_0000117978" description="NADH-ubiquinone oxidoreductase chain 4">
    <location>
        <begin position="1" status="less than"/>
        <end position="231" status="greater than"/>
    </location>
</feature>
<feature type="transmembrane region" description="Helical" evidence="2">
    <location>
        <begin position="1"/>
        <end position="21"/>
    </location>
</feature>
<feature type="transmembrane region" description="Helical" evidence="2">
    <location>
        <begin position="34"/>
        <end position="54"/>
    </location>
</feature>
<feature type="transmembrane region" description="Helical" evidence="2">
    <location>
        <begin position="63"/>
        <end position="85"/>
    </location>
</feature>
<feature type="transmembrane region" description="Helical" evidence="2">
    <location>
        <begin position="89"/>
        <end position="111"/>
    </location>
</feature>
<feature type="transmembrane region" description="Helical" evidence="2">
    <location>
        <begin position="128"/>
        <end position="148"/>
    </location>
</feature>
<feature type="transmembrane region" description="Helical" evidence="2">
    <location>
        <begin position="169"/>
        <end position="189"/>
    </location>
</feature>
<feature type="transmembrane region" description="Helical" evidence="2">
    <location>
        <begin position="211"/>
        <end position="231"/>
    </location>
</feature>
<feature type="non-terminal residue">
    <location>
        <position position="1"/>
    </location>
</feature>
<feature type="non-terminal residue">
    <location>
        <position position="231"/>
    </location>
</feature>
<dbReference type="EC" id="7.1.1.2"/>
<dbReference type="EMBL" id="U41888">
    <property type="protein sequence ID" value="AAB46651.1"/>
    <property type="molecule type" value="Genomic_DNA"/>
</dbReference>
<dbReference type="SMR" id="O03773"/>
<dbReference type="GO" id="GO:0031966">
    <property type="term" value="C:mitochondrial membrane"/>
    <property type="evidence" value="ECO:0007669"/>
    <property type="project" value="UniProtKB-SubCell"/>
</dbReference>
<dbReference type="GO" id="GO:0008137">
    <property type="term" value="F:NADH dehydrogenase (ubiquinone) activity"/>
    <property type="evidence" value="ECO:0007669"/>
    <property type="project" value="UniProtKB-EC"/>
</dbReference>
<dbReference type="GO" id="GO:0048039">
    <property type="term" value="F:ubiquinone binding"/>
    <property type="evidence" value="ECO:0007669"/>
    <property type="project" value="TreeGrafter"/>
</dbReference>
<dbReference type="GO" id="GO:0042773">
    <property type="term" value="P:ATP synthesis coupled electron transport"/>
    <property type="evidence" value="ECO:0007669"/>
    <property type="project" value="InterPro"/>
</dbReference>
<dbReference type="GO" id="GO:0015990">
    <property type="term" value="P:electron transport coupled proton transport"/>
    <property type="evidence" value="ECO:0007669"/>
    <property type="project" value="TreeGrafter"/>
</dbReference>
<dbReference type="InterPro" id="IPR003918">
    <property type="entry name" value="NADH_UbQ_OxRdtase"/>
</dbReference>
<dbReference type="InterPro" id="IPR001750">
    <property type="entry name" value="ND/Mrp_TM"/>
</dbReference>
<dbReference type="PANTHER" id="PTHR43507">
    <property type="entry name" value="NADH-UBIQUINONE OXIDOREDUCTASE CHAIN 4"/>
    <property type="match status" value="1"/>
</dbReference>
<dbReference type="PANTHER" id="PTHR43507:SF20">
    <property type="entry name" value="NADH-UBIQUINONE OXIDOREDUCTASE CHAIN 4"/>
    <property type="match status" value="1"/>
</dbReference>
<dbReference type="Pfam" id="PF00361">
    <property type="entry name" value="Proton_antipo_M"/>
    <property type="match status" value="1"/>
</dbReference>
<keyword id="KW-0249">Electron transport</keyword>
<keyword id="KW-0472">Membrane</keyword>
<keyword id="KW-0496">Mitochondrion</keyword>
<keyword id="KW-0520">NAD</keyword>
<keyword id="KW-0679">Respiratory chain</keyword>
<keyword id="KW-1278">Translocase</keyword>
<keyword id="KW-0812">Transmembrane</keyword>
<keyword id="KW-1133">Transmembrane helix</keyword>
<keyword id="KW-0813">Transport</keyword>
<keyword id="KW-0830">Ubiquinone</keyword>
<accession>O03773</accession>
<proteinExistence type="inferred from homology"/>
<comment type="function">
    <text evidence="1">Core subunit of the mitochondrial membrane respiratory chain NADH dehydrogenase (Complex I) that is believed to belong to the minimal assembly required for catalysis. Complex I functions in the transfer of electrons from NADH to the respiratory chain. The immediate electron acceptor for the enzyme is believed to be ubiquinone (By similarity).</text>
</comment>
<comment type="catalytic activity">
    <reaction>
        <text>a ubiquinone + NADH + 5 H(+)(in) = a ubiquinol + NAD(+) + 4 H(+)(out)</text>
        <dbReference type="Rhea" id="RHEA:29091"/>
        <dbReference type="Rhea" id="RHEA-COMP:9565"/>
        <dbReference type="Rhea" id="RHEA-COMP:9566"/>
        <dbReference type="ChEBI" id="CHEBI:15378"/>
        <dbReference type="ChEBI" id="CHEBI:16389"/>
        <dbReference type="ChEBI" id="CHEBI:17976"/>
        <dbReference type="ChEBI" id="CHEBI:57540"/>
        <dbReference type="ChEBI" id="CHEBI:57945"/>
        <dbReference type="EC" id="7.1.1.2"/>
    </reaction>
</comment>
<comment type="subcellular location">
    <subcellularLocation>
        <location evidence="1">Mitochondrion membrane</location>
        <topology evidence="1">Multi-pass membrane protein</topology>
    </subcellularLocation>
</comment>
<comment type="similarity">
    <text evidence="3">Belongs to the complex I subunit 4 family.</text>
</comment>
<geneLocation type="mitochondrion"/>
<name>NU4M_POROP</name>
<sequence length="231" mass="25450">PIAGSMVLAAILLKLGGYGIIRMMQILPTTKTDMFLPFIVLALWGAILANLTCLQQTDLKSLIAYSSVSHMGLVAAAIIIQTPWGLSGAMALMIAHGFTSSALFCLANTTYERTHTRILILTRGFHNILPMTSTWWLLANLMNIATPPSLNFTSELLIMSTLFNWCPTTIILLGLSMLITASYSLHMFLSTQMGSTLLNSQTEPMHSREHLLMTLHLIPLMMISMKPELVI</sequence>
<protein>
    <recommendedName>
        <fullName>NADH-ubiquinone oxidoreductase chain 4</fullName>
        <ecNumber>7.1.1.2</ecNumber>
    </recommendedName>
    <alternativeName>
        <fullName>NADH dehydrogenase subunit 4</fullName>
    </alternativeName>
</protein>
<reference key="1">
    <citation type="journal article" date="1996" name="Copeia">
        <title>Crotaline intergeneric relationships based on mitochondrial DNA sequence data.</title>
        <authorList>
            <person name="Kraus F."/>
            <person name="Mink D.G."/>
            <person name="Brown W.M."/>
        </authorList>
    </citation>
    <scope>NUCLEOTIDE SEQUENCE [GENOMIC DNA]</scope>
</reference>
<organism>
    <name type="scientific">Porthidium ophryomegas</name>
    <name type="common">Slender hognose viper</name>
    <dbReference type="NCBI Taxonomy" id="44717"/>
    <lineage>
        <taxon>Eukaryota</taxon>
        <taxon>Metazoa</taxon>
        <taxon>Chordata</taxon>
        <taxon>Craniata</taxon>
        <taxon>Vertebrata</taxon>
        <taxon>Euteleostomi</taxon>
        <taxon>Lepidosauria</taxon>
        <taxon>Squamata</taxon>
        <taxon>Bifurcata</taxon>
        <taxon>Unidentata</taxon>
        <taxon>Episquamata</taxon>
        <taxon>Toxicofera</taxon>
        <taxon>Serpentes</taxon>
        <taxon>Colubroidea</taxon>
        <taxon>Viperidae</taxon>
        <taxon>Crotalinae</taxon>
        <taxon>Porthidium</taxon>
    </lineage>
</organism>